<evidence type="ECO:0000255" key="1">
    <source>
        <dbReference type="HAMAP-Rule" id="MF_00514"/>
    </source>
</evidence>
<evidence type="ECO:0000256" key="2">
    <source>
        <dbReference type="SAM" id="MobiDB-lite"/>
    </source>
</evidence>
<evidence type="ECO:0000305" key="3"/>
<protein>
    <recommendedName>
        <fullName evidence="1">Large ribosomal subunit protein bL35</fullName>
    </recommendedName>
    <alternativeName>
        <fullName evidence="3">50S ribosomal protein L35</fullName>
    </alternativeName>
</protein>
<sequence length="64" mass="7132">MPKIKTHRGAAKRFKKTGTGKIKRSKAYASHLLGGKSPKRKRNLRKAGLVSEAETRGISRLIPY</sequence>
<keyword id="KW-1185">Reference proteome</keyword>
<keyword id="KW-0687">Ribonucleoprotein</keyword>
<keyword id="KW-0689">Ribosomal protein</keyword>
<organism>
    <name type="scientific">Syntrophomonas wolfei subsp. wolfei (strain DSM 2245B / Goettingen)</name>
    <dbReference type="NCBI Taxonomy" id="335541"/>
    <lineage>
        <taxon>Bacteria</taxon>
        <taxon>Bacillati</taxon>
        <taxon>Bacillota</taxon>
        <taxon>Clostridia</taxon>
        <taxon>Eubacteriales</taxon>
        <taxon>Syntrophomonadaceae</taxon>
        <taxon>Syntrophomonas</taxon>
    </lineage>
</organism>
<comment type="similarity">
    <text evidence="1">Belongs to the bacterial ribosomal protein bL35 family.</text>
</comment>
<name>RL35_SYNWW</name>
<dbReference type="EMBL" id="CP000448">
    <property type="protein sequence ID" value="ABI68401.1"/>
    <property type="molecule type" value="Genomic_DNA"/>
</dbReference>
<dbReference type="RefSeq" id="WP_011640505.1">
    <property type="nucleotide sequence ID" value="NC_008346.1"/>
</dbReference>
<dbReference type="SMR" id="Q0AY03"/>
<dbReference type="STRING" id="335541.Swol_1091"/>
<dbReference type="KEGG" id="swo:Swol_1091"/>
<dbReference type="eggNOG" id="COG0291">
    <property type="taxonomic scope" value="Bacteria"/>
</dbReference>
<dbReference type="HOGENOM" id="CLU_169643_4_3_9"/>
<dbReference type="OrthoDB" id="47476at2"/>
<dbReference type="Proteomes" id="UP000001968">
    <property type="component" value="Chromosome"/>
</dbReference>
<dbReference type="GO" id="GO:0022625">
    <property type="term" value="C:cytosolic large ribosomal subunit"/>
    <property type="evidence" value="ECO:0007669"/>
    <property type="project" value="TreeGrafter"/>
</dbReference>
<dbReference type="GO" id="GO:0003735">
    <property type="term" value="F:structural constituent of ribosome"/>
    <property type="evidence" value="ECO:0007669"/>
    <property type="project" value="InterPro"/>
</dbReference>
<dbReference type="GO" id="GO:0006412">
    <property type="term" value="P:translation"/>
    <property type="evidence" value="ECO:0007669"/>
    <property type="project" value="UniProtKB-UniRule"/>
</dbReference>
<dbReference type="FunFam" id="4.10.410.60:FF:000001">
    <property type="entry name" value="50S ribosomal protein L35"/>
    <property type="match status" value="1"/>
</dbReference>
<dbReference type="Gene3D" id="4.10.410.60">
    <property type="match status" value="1"/>
</dbReference>
<dbReference type="HAMAP" id="MF_00514">
    <property type="entry name" value="Ribosomal_bL35"/>
    <property type="match status" value="1"/>
</dbReference>
<dbReference type="InterPro" id="IPR001706">
    <property type="entry name" value="Ribosomal_bL35"/>
</dbReference>
<dbReference type="InterPro" id="IPR021137">
    <property type="entry name" value="Ribosomal_bL35-like"/>
</dbReference>
<dbReference type="InterPro" id="IPR018265">
    <property type="entry name" value="Ribosomal_bL35_CS"/>
</dbReference>
<dbReference type="InterPro" id="IPR037229">
    <property type="entry name" value="Ribosomal_bL35_sf"/>
</dbReference>
<dbReference type="NCBIfam" id="TIGR00001">
    <property type="entry name" value="rpmI_bact"/>
    <property type="match status" value="1"/>
</dbReference>
<dbReference type="PANTHER" id="PTHR33343">
    <property type="entry name" value="54S RIBOSOMAL PROTEIN BL35M"/>
    <property type="match status" value="1"/>
</dbReference>
<dbReference type="PANTHER" id="PTHR33343:SF1">
    <property type="entry name" value="LARGE RIBOSOMAL SUBUNIT PROTEIN BL35M"/>
    <property type="match status" value="1"/>
</dbReference>
<dbReference type="Pfam" id="PF01632">
    <property type="entry name" value="Ribosomal_L35p"/>
    <property type="match status" value="1"/>
</dbReference>
<dbReference type="PRINTS" id="PR00064">
    <property type="entry name" value="RIBOSOMALL35"/>
</dbReference>
<dbReference type="SUPFAM" id="SSF143034">
    <property type="entry name" value="L35p-like"/>
    <property type="match status" value="1"/>
</dbReference>
<dbReference type="PROSITE" id="PS00936">
    <property type="entry name" value="RIBOSOMAL_L35"/>
    <property type="match status" value="1"/>
</dbReference>
<feature type="chain" id="PRO_1000050784" description="Large ribosomal subunit protein bL35">
    <location>
        <begin position="1"/>
        <end position="64"/>
    </location>
</feature>
<feature type="region of interest" description="Disordered" evidence="2">
    <location>
        <begin position="1"/>
        <end position="48"/>
    </location>
</feature>
<feature type="compositionally biased region" description="Basic residues" evidence="2">
    <location>
        <begin position="1"/>
        <end position="26"/>
    </location>
</feature>
<gene>
    <name evidence="1" type="primary">rpmI</name>
    <name type="ordered locus">Swol_1091</name>
</gene>
<proteinExistence type="inferred from homology"/>
<reference key="1">
    <citation type="journal article" date="2010" name="Environ. Microbiol.">
        <title>The genome of Syntrophomonas wolfei: new insights into syntrophic metabolism and biohydrogen production.</title>
        <authorList>
            <person name="Sieber J.R."/>
            <person name="Sims D.R."/>
            <person name="Han C."/>
            <person name="Kim E."/>
            <person name="Lykidis A."/>
            <person name="Lapidus A.L."/>
            <person name="McDonnald E."/>
            <person name="Rohlin L."/>
            <person name="Culley D.E."/>
            <person name="Gunsalus R."/>
            <person name="McInerney M.J."/>
        </authorList>
    </citation>
    <scope>NUCLEOTIDE SEQUENCE [LARGE SCALE GENOMIC DNA]</scope>
    <source>
        <strain>DSM 2245B / Goettingen</strain>
    </source>
</reference>
<accession>Q0AY03</accession>